<name>APAG_VIBA3</name>
<protein>
    <recommendedName>
        <fullName evidence="1">Protein ApaG</fullName>
    </recommendedName>
</protein>
<organism>
    <name type="scientific">Vibrio atlanticus (strain LGP32)</name>
    <name type="common">Vibrio splendidus (strain Mel32)</name>
    <dbReference type="NCBI Taxonomy" id="575788"/>
    <lineage>
        <taxon>Bacteria</taxon>
        <taxon>Pseudomonadati</taxon>
        <taxon>Pseudomonadota</taxon>
        <taxon>Gammaproteobacteria</taxon>
        <taxon>Vibrionales</taxon>
        <taxon>Vibrionaceae</taxon>
        <taxon>Vibrio</taxon>
    </lineage>
</organism>
<feature type="chain" id="PRO_1000148505" description="Protein ApaG">
    <location>
        <begin position="1"/>
        <end position="126"/>
    </location>
</feature>
<feature type="domain" description="ApaG" evidence="1">
    <location>
        <begin position="2"/>
        <end position="126"/>
    </location>
</feature>
<dbReference type="EMBL" id="FM954972">
    <property type="protein sequence ID" value="CAV17378.1"/>
    <property type="molecule type" value="Genomic_DNA"/>
</dbReference>
<dbReference type="SMR" id="B7VIE1"/>
<dbReference type="STRING" id="575788.VS_0369"/>
<dbReference type="KEGG" id="vsp:VS_0369"/>
<dbReference type="PATRIC" id="fig|575788.5.peg.1734"/>
<dbReference type="eggNOG" id="COG2967">
    <property type="taxonomic scope" value="Bacteria"/>
</dbReference>
<dbReference type="HOGENOM" id="CLU_128074_0_0_6"/>
<dbReference type="Proteomes" id="UP000009100">
    <property type="component" value="Chromosome 1"/>
</dbReference>
<dbReference type="Gene3D" id="2.60.40.1470">
    <property type="entry name" value="ApaG domain"/>
    <property type="match status" value="1"/>
</dbReference>
<dbReference type="HAMAP" id="MF_00791">
    <property type="entry name" value="ApaG"/>
    <property type="match status" value="1"/>
</dbReference>
<dbReference type="InterPro" id="IPR050718">
    <property type="entry name" value="ApaG-like"/>
</dbReference>
<dbReference type="InterPro" id="IPR007474">
    <property type="entry name" value="ApaG_domain"/>
</dbReference>
<dbReference type="InterPro" id="IPR036767">
    <property type="entry name" value="ApaG_sf"/>
</dbReference>
<dbReference type="InterPro" id="IPR023065">
    <property type="entry name" value="Uncharacterised_ApaG"/>
</dbReference>
<dbReference type="NCBIfam" id="NF003967">
    <property type="entry name" value="PRK05461.1"/>
    <property type="match status" value="1"/>
</dbReference>
<dbReference type="PANTHER" id="PTHR47191">
    <property type="entry name" value="OS05G0170800 PROTEIN"/>
    <property type="match status" value="1"/>
</dbReference>
<dbReference type="PANTHER" id="PTHR47191:SF2">
    <property type="entry name" value="OS05G0170800 PROTEIN"/>
    <property type="match status" value="1"/>
</dbReference>
<dbReference type="Pfam" id="PF04379">
    <property type="entry name" value="DUF525"/>
    <property type="match status" value="1"/>
</dbReference>
<dbReference type="SUPFAM" id="SSF110069">
    <property type="entry name" value="ApaG-like"/>
    <property type="match status" value="1"/>
</dbReference>
<dbReference type="PROSITE" id="PS51087">
    <property type="entry name" value="APAG"/>
    <property type="match status" value="1"/>
</dbReference>
<accession>B7VIE1</accession>
<sequence length="126" mass="14156">MDISTPCIKCQVHSKYIEEQSEPSKNRYVFAYIITIKNLSKTTVQLMSRSWLITDSNGKQLTIEGDGVVGQQPVIEANDEYTYTSGTVIETPVGVMQGHYVMTDHKGIDFITEVDPFRLAIPNILN</sequence>
<evidence type="ECO:0000255" key="1">
    <source>
        <dbReference type="HAMAP-Rule" id="MF_00791"/>
    </source>
</evidence>
<gene>
    <name evidence="1" type="primary">apaG</name>
    <name type="ordered locus">VS_0369</name>
</gene>
<reference key="1">
    <citation type="submission" date="2009-02" db="EMBL/GenBank/DDBJ databases">
        <title>Vibrio splendidus str. LGP32 complete genome.</title>
        <authorList>
            <person name="Mazel D."/>
            <person name="Le Roux F."/>
        </authorList>
    </citation>
    <scope>NUCLEOTIDE SEQUENCE [LARGE SCALE GENOMIC DNA]</scope>
    <source>
        <strain>LGP32</strain>
    </source>
</reference>
<proteinExistence type="inferred from homology"/>